<dbReference type="EMBL" id="CP000626">
    <property type="protein sequence ID" value="ABQ18340.1"/>
    <property type="molecule type" value="Genomic_DNA"/>
</dbReference>
<dbReference type="EMBL" id="CP001236">
    <property type="protein sequence ID" value="ACP11619.1"/>
    <property type="molecule type" value="Genomic_DNA"/>
</dbReference>
<dbReference type="RefSeq" id="WP_000753197.1">
    <property type="nucleotide sequence ID" value="NZ_JAACZH010000019.1"/>
</dbReference>
<dbReference type="SMR" id="A5F0B6"/>
<dbReference type="KEGG" id="vco:VC0395_0473"/>
<dbReference type="KEGG" id="vcr:VC395_A0785"/>
<dbReference type="PATRIC" id="fig|345073.21.peg.3516"/>
<dbReference type="eggNOG" id="COG2353">
    <property type="taxonomic scope" value="Bacteria"/>
</dbReference>
<dbReference type="HOGENOM" id="CLU_071003_1_2_6"/>
<dbReference type="OrthoDB" id="9811006at2"/>
<dbReference type="Proteomes" id="UP000000249">
    <property type="component" value="Chromosome 1"/>
</dbReference>
<dbReference type="GO" id="GO:0042597">
    <property type="term" value="C:periplasmic space"/>
    <property type="evidence" value="ECO:0007669"/>
    <property type="project" value="UniProtKB-SubCell"/>
</dbReference>
<dbReference type="Gene3D" id="2.40.128.110">
    <property type="entry name" value="Lipid/polyisoprenoid-binding, YceI-like"/>
    <property type="match status" value="1"/>
</dbReference>
<dbReference type="HAMAP" id="MF_00780">
    <property type="entry name" value="UPF0312"/>
    <property type="match status" value="1"/>
</dbReference>
<dbReference type="InterPro" id="IPR007372">
    <property type="entry name" value="Lipid/polyisoprenoid-bd_YceI"/>
</dbReference>
<dbReference type="InterPro" id="IPR036761">
    <property type="entry name" value="TTHA0802/YceI-like_sf"/>
</dbReference>
<dbReference type="InterPro" id="IPR023480">
    <property type="entry name" value="UPF0312/YceI"/>
</dbReference>
<dbReference type="NCBIfam" id="NF002994">
    <property type="entry name" value="PRK03757.1"/>
    <property type="match status" value="1"/>
</dbReference>
<dbReference type="PANTHER" id="PTHR34406">
    <property type="entry name" value="PROTEIN YCEI"/>
    <property type="match status" value="1"/>
</dbReference>
<dbReference type="PANTHER" id="PTHR34406:SF1">
    <property type="entry name" value="PROTEIN YCEI"/>
    <property type="match status" value="1"/>
</dbReference>
<dbReference type="Pfam" id="PF04264">
    <property type="entry name" value="YceI"/>
    <property type="match status" value="1"/>
</dbReference>
<dbReference type="SMART" id="SM00867">
    <property type="entry name" value="YceI"/>
    <property type="match status" value="1"/>
</dbReference>
<dbReference type="SUPFAM" id="SSF101874">
    <property type="entry name" value="YceI-like"/>
    <property type="match status" value="1"/>
</dbReference>
<evidence type="ECO:0000255" key="1">
    <source>
        <dbReference type="HAMAP-Rule" id="MF_00780"/>
    </source>
</evidence>
<comment type="subcellular location">
    <subcellularLocation>
        <location evidence="1">Periplasm</location>
    </subcellularLocation>
</comment>
<comment type="similarity">
    <text evidence="1">Belongs to the UPF0312 family. Type 1 subfamily.</text>
</comment>
<proteinExistence type="inferred from homology"/>
<protein>
    <recommendedName>
        <fullName evidence="1">UPF0312 protein VC0395_0473/VC395_A0785</fullName>
    </recommendedName>
</protein>
<keyword id="KW-0574">Periplasm</keyword>
<keyword id="KW-0732">Signal</keyword>
<gene>
    <name type="ordered locus">VC0395_0473</name>
    <name type="ordered locus">VC395_A0785</name>
</gene>
<name>Y473_VIBC3</name>
<organism>
    <name type="scientific">Vibrio cholerae serotype O1 (strain ATCC 39541 / Classical Ogawa 395 / O395)</name>
    <dbReference type="NCBI Taxonomy" id="345073"/>
    <lineage>
        <taxon>Bacteria</taxon>
        <taxon>Pseudomonadati</taxon>
        <taxon>Pseudomonadota</taxon>
        <taxon>Gammaproteobacteria</taxon>
        <taxon>Vibrionales</taxon>
        <taxon>Vibrionaceae</taxon>
        <taxon>Vibrio</taxon>
    </lineage>
</organism>
<feature type="signal peptide" evidence="1">
    <location>
        <begin position="1"/>
        <end position="22"/>
    </location>
</feature>
<feature type="chain" id="PRO_1000072837" description="UPF0312 protein VC0395_0473/VC395_A0785">
    <location>
        <begin position="23"/>
        <end position="189"/>
    </location>
</feature>
<reference key="1">
    <citation type="submission" date="2007-03" db="EMBL/GenBank/DDBJ databases">
        <authorList>
            <person name="Heidelberg J."/>
        </authorList>
    </citation>
    <scope>NUCLEOTIDE SEQUENCE [LARGE SCALE GENOMIC DNA]</scope>
    <source>
        <strain>ATCC 39541 / Classical Ogawa 395 / O395</strain>
    </source>
</reference>
<reference key="2">
    <citation type="journal article" date="2008" name="PLoS ONE">
        <title>A recalibrated molecular clock and independent origins for the cholera pandemic clones.</title>
        <authorList>
            <person name="Feng L."/>
            <person name="Reeves P.R."/>
            <person name="Lan R."/>
            <person name="Ren Y."/>
            <person name="Gao C."/>
            <person name="Zhou Z."/>
            <person name="Ren Y."/>
            <person name="Cheng J."/>
            <person name="Wang W."/>
            <person name="Wang J."/>
            <person name="Qian W."/>
            <person name="Li D."/>
            <person name="Wang L."/>
        </authorList>
    </citation>
    <scope>NUCLEOTIDE SEQUENCE [LARGE SCALE GENOMIC DNA]</scope>
    <source>
        <strain>ATCC 39541 / Classical Ogawa 395 / O395</strain>
    </source>
</reference>
<sequence>MKKTLMAVGLAAVISIPFAANAADYVIDTKGAHASINFKVNHLGYSYIKGRFNKFDGEFSYDPANIAASSVVVNVDTRSLDSNHAERDKHIRSADFIDASKYSTATFKSTEVVDKGNGQLEVKGDLTLHGQTKPIVINAEFIGAGQDPWGGQRAGFAGTTRLELKDFGIQVMGASSYVDMELHVEGVQK</sequence>
<accession>A5F0B6</accession>
<accession>C3M656</accession>